<organism>
    <name type="scientific">Pongo abelii</name>
    <name type="common">Sumatran orangutan</name>
    <name type="synonym">Pongo pygmaeus abelii</name>
    <dbReference type="NCBI Taxonomy" id="9601"/>
    <lineage>
        <taxon>Eukaryota</taxon>
        <taxon>Metazoa</taxon>
        <taxon>Chordata</taxon>
        <taxon>Craniata</taxon>
        <taxon>Vertebrata</taxon>
        <taxon>Euteleostomi</taxon>
        <taxon>Mammalia</taxon>
        <taxon>Eutheria</taxon>
        <taxon>Euarchontoglires</taxon>
        <taxon>Primates</taxon>
        <taxon>Haplorrhini</taxon>
        <taxon>Catarrhini</taxon>
        <taxon>Hominidae</taxon>
        <taxon>Pongo</taxon>
    </lineage>
</organism>
<keyword id="KW-1003">Cell membrane</keyword>
<keyword id="KW-0175">Coiled coil</keyword>
<keyword id="KW-0963">Cytoplasm</keyword>
<keyword id="KW-0325">Glycoprotein</keyword>
<keyword id="KW-0472">Membrane</keyword>
<keyword id="KW-0539">Nucleus</keyword>
<keyword id="KW-0597">Phosphoprotein</keyword>
<keyword id="KW-1185">Reference proteome</keyword>
<keyword id="KW-0732">Signal</keyword>
<keyword id="KW-0812">Transmembrane</keyword>
<keyword id="KW-1133">Transmembrane helix</keyword>
<gene>
    <name type="primary">PTTG1IP</name>
</gene>
<evidence type="ECO:0000250" key="1"/>
<evidence type="ECO:0000250" key="2">
    <source>
        <dbReference type="UniProtKB" id="Q8R143"/>
    </source>
</evidence>
<evidence type="ECO:0000255" key="3"/>
<evidence type="ECO:0000256" key="4">
    <source>
        <dbReference type="SAM" id="MobiDB-lite"/>
    </source>
</evidence>
<evidence type="ECO:0000305" key="5"/>
<name>PTTG_PONAB</name>
<sequence length="180" mass="20324">MAPGVARGPTPYWRLRLGGAALLLLLIPVAAAQEPPGAACSQNTNKTCEECLKNVSCLWCNTNKACLDYPVTSVLPPASLCKLSSARWGVCWVNFEALIITMSVVGGTLLLGIAICCCCCCRRKRSRKPDRSEEKAMREREERRIRQEERRAEMKTRHDEIRKKYGLFKEENPYARFENN</sequence>
<reference key="1">
    <citation type="submission" date="2004-11" db="EMBL/GenBank/DDBJ databases">
        <authorList>
            <consortium name="The German cDNA consortium"/>
        </authorList>
    </citation>
    <scope>NUCLEOTIDE SEQUENCE [LARGE SCALE MRNA]</scope>
    <source>
        <tissue>Brain cortex</tissue>
        <tissue>Kidney</tissue>
    </source>
</reference>
<proteinExistence type="evidence at transcript level"/>
<comment type="function">
    <text evidence="1">May facilitate PTTG1 nuclear translocation.</text>
</comment>
<comment type="subunit">
    <text evidence="1">Interacts with PTTG1.</text>
</comment>
<comment type="subcellular location">
    <subcellularLocation>
        <location evidence="1">Cell membrane</location>
        <topology evidence="1">Single-pass type I membrane protein</topology>
    </subcellularLocation>
    <subcellularLocation>
        <location evidence="1">Cytoplasm</location>
    </subcellularLocation>
    <subcellularLocation>
        <location evidence="1">Nucleus</location>
    </subcellularLocation>
    <text evidence="1">May be cytoplasmic and nuclear.</text>
</comment>
<dbReference type="EMBL" id="CR857642">
    <property type="protein sequence ID" value="CAH89916.1"/>
    <property type="molecule type" value="mRNA"/>
</dbReference>
<dbReference type="EMBL" id="CR857941">
    <property type="protein sequence ID" value="CAH90188.1"/>
    <property type="molecule type" value="mRNA"/>
</dbReference>
<dbReference type="EMBL" id="CR926045">
    <property type="protein sequence ID" value="CAI29677.1"/>
    <property type="molecule type" value="mRNA"/>
</dbReference>
<dbReference type="RefSeq" id="NP_001127103.2">
    <property type="nucleotide sequence ID" value="NM_001133631.2"/>
</dbReference>
<dbReference type="RefSeq" id="NP_001128770.1">
    <property type="nucleotide sequence ID" value="NM_001135298.1"/>
</dbReference>
<dbReference type="SMR" id="Q5NVI6"/>
<dbReference type="FunCoup" id="Q5NVI6">
    <property type="interactions" value="1245"/>
</dbReference>
<dbReference type="GlyCosmos" id="Q5NVI6">
    <property type="glycosylation" value="2 sites, No reported glycans"/>
</dbReference>
<dbReference type="Ensembl" id="ENSPPYT00000035073.1">
    <property type="protein sequence ID" value="ENSPPYP00000033601.1"/>
    <property type="gene ID" value="ENSPPYG00000036754.1"/>
</dbReference>
<dbReference type="GeneID" id="100174140"/>
<dbReference type="KEGG" id="pon:100174140"/>
<dbReference type="CTD" id="754"/>
<dbReference type="eggNOG" id="ENOG502RYM1">
    <property type="taxonomic scope" value="Eukaryota"/>
</dbReference>
<dbReference type="GeneTree" id="ENSGT00390000004977"/>
<dbReference type="InParanoid" id="Q5NVI6"/>
<dbReference type="OMA" id="CVEYPVR"/>
<dbReference type="OrthoDB" id="5829916at2759"/>
<dbReference type="Proteomes" id="UP000001595">
    <property type="component" value="Chromosome 21"/>
</dbReference>
<dbReference type="GO" id="GO:0005737">
    <property type="term" value="C:cytoplasm"/>
    <property type="evidence" value="ECO:0007669"/>
    <property type="project" value="UniProtKB-SubCell"/>
</dbReference>
<dbReference type="GO" id="GO:0005654">
    <property type="term" value="C:nucleoplasm"/>
    <property type="evidence" value="ECO:0007669"/>
    <property type="project" value="Ensembl"/>
</dbReference>
<dbReference type="GO" id="GO:0005886">
    <property type="term" value="C:plasma membrane"/>
    <property type="evidence" value="ECO:0007669"/>
    <property type="project" value="UniProtKB-SubCell"/>
</dbReference>
<dbReference type="GO" id="GO:0002039">
    <property type="term" value="F:p53 binding"/>
    <property type="evidence" value="ECO:0007669"/>
    <property type="project" value="Ensembl"/>
</dbReference>
<dbReference type="GO" id="GO:0043518">
    <property type="term" value="P:negative regulation of DNA damage response, signal transduction by p53 class mediator"/>
    <property type="evidence" value="ECO:0007669"/>
    <property type="project" value="Ensembl"/>
</dbReference>
<dbReference type="GO" id="GO:1902254">
    <property type="term" value="P:negative regulation of intrinsic apoptotic signaling pathway by p53 class mediator"/>
    <property type="evidence" value="ECO:0007669"/>
    <property type="project" value="Ensembl"/>
</dbReference>
<dbReference type="GO" id="GO:0031398">
    <property type="term" value="P:positive regulation of protein ubiquitination"/>
    <property type="evidence" value="ECO:0007669"/>
    <property type="project" value="Ensembl"/>
</dbReference>
<dbReference type="GO" id="GO:0006606">
    <property type="term" value="P:protein import into nucleus"/>
    <property type="evidence" value="ECO:0007669"/>
    <property type="project" value="Ensembl"/>
</dbReference>
<dbReference type="InterPro" id="IPR016201">
    <property type="entry name" value="PSI"/>
</dbReference>
<dbReference type="InterPro" id="IPR052304">
    <property type="entry name" value="PTTG1IP"/>
</dbReference>
<dbReference type="PANTHER" id="PTHR15191:SF14">
    <property type="entry name" value="PITUITARY TUMOR-TRANSFORMING GENE 1 PROTEIN-INTERACTING PROTEIN"/>
    <property type="match status" value="1"/>
</dbReference>
<dbReference type="PANTHER" id="PTHR15191">
    <property type="entry name" value="PROTEIN CBG20567"/>
    <property type="match status" value="1"/>
</dbReference>
<dbReference type="SMART" id="SM00423">
    <property type="entry name" value="PSI"/>
    <property type="match status" value="1"/>
</dbReference>
<accession>Q5NVI6</accession>
<accession>Q5RDG9</accession>
<accession>Q5RE91</accession>
<protein>
    <recommendedName>
        <fullName>Pituitary tumor-transforming gene 1 protein-interacting protein</fullName>
    </recommendedName>
    <alternativeName>
        <fullName>Pituitary tumor-transforming gene protein-binding factor</fullName>
        <shortName>PBF</shortName>
        <shortName>PTTG-binding factor</shortName>
    </alternativeName>
</protein>
<feature type="signal peptide" evidence="3">
    <location>
        <begin position="1"/>
        <end position="32"/>
    </location>
</feature>
<feature type="chain" id="PRO_0000022186" description="Pituitary tumor-transforming gene 1 protein-interacting protein">
    <location>
        <begin position="33"/>
        <end position="180"/>
    </location>
</feature>
<feature type="topological domain" description="Extracellular" evidence="3">
    <location>
        <begin position="33"/>
        <end position="96"/>
    </location>
</feature>
<feature type="transmembrane region" description="Helical" evidence="3">
    <location>
        <begin position="97"/>
        <end position="117"/>
    </location>
</feature>
<feature type="topological domain" description="Cytoplasmic" evidence="3">
    <location>
        <begin position="118"/>
        <end position="180"/>
    </location>
</feature>
<feature type="domain" description="PSI">
    <location>
        <begin position="39"/>
        <end position="92"/>
    </location>
</feature>
<feature type="region of interest" description="Disordered" evidence="4">
    <location>
        <begin position="131"/>
        <end position="157"/>
    </location>
</feature>
<feature type="coiled-coil region" evidence="3">
    <location>
        <begin position="130"/>
        <end position="166"/>
    </location>
</feature>
<feature type="modified residue" description="Phosphotyrosine" evidence="2">
    <location>
        <position position="174"/>
    </location>
</feature>
<feature type="glycosylation site" description="N-linked (GlcNAc...) asparagine" evidence="3">
    <location>
        <position position="45"/>
    </location>
</feature>
<feature type="glycosylation site" description="N-linked (GlcNAc...) asparagine" evidence="3">
    <location>
        <position position="54"/>
    </location>
</feature>
<feature type="sequence conflict" description="In Ref. 1; CAH90188." evidence="5" ref="1">
    <location>
        <begin position="17"/>
        <end position="22"/>
    </location>
</feature>
<feature type="sequence conflict" description="In Ref. 1; CAH89916." evidence="5" ref="1">
    <location>
        <position position="116"/>
    </location>
</feature>
<feature type="sequence conflict" description="In Ref. 1; CAI29677." evidence="5" ref="1">
    <original>K</original>
    <variation>R</variation>
    <location>
        <position position="155"/>
    </location>
</feature>